<gene>
    <name type="primary">hisD</name>
    <name type="ordered locus">STM2072</name>
</gene>
<sequence length="434" mass="45889">MSFNTLIDWNSCSPEQQRALLTRPAISASDSITRTVSDILDNVKTRGDDALREYSAKFDKTEVTALRVTPEEIAAAGARLSDELKQAMTAAVKNIETFHSAQTLPPVDVETQPGVRCQQVTRPVSSVGLYIPGGSAPLFSTVLMLATPARIAGCQKVVLCSPPPIADEILYAAQLCGVQEIFNVGGAQAIAALAFGSESVPKVDKIFGPGNAFVTEAKRQVSQRLDGAAIDMPAGPSEVLVIADSGATPDFVASDLLSQAEHGPDSQVILLTPDADIARKVAEAVERQLAELPRADTARQALSASRLIVTKDLAQCVAISNQYGPEHLIIQTRNARDLVDAITSAGSVFLGDWSPESAGDYASGTNHVLPTYGYTATCSSLGLADFQKRMTVQELSKAGFSALASTIETLAAAERLTAHKNAVTLRVNALKEQA</sequence>
<evidence type="ECO:0000250" key="1"/>
<evidence type="ECO:0000269" key="2">
    <source>
    </source>
</evidence>
<evidence type="ECO:0000269" key="3">
    <source>
    </source>
</evidence>
<evidence type="ECO:0000269" key="4">
    <source>
    </source>
</evidence>
<evidence type="ECO:0000269" key="5">
    <source>
    </source>
</evidence>
<evidence type="ECO:0000305" key="6"/>
<feature type="initiator methionine" description="Removed" evidence="5">
    <location>
        <position position="1"/>
    </location>
</feature>
<feature type="chain" id="PRO_0000135840" description="Histidinol dehydrogenase">
    <location>
        <begin position="2"/>
        <end position="434"/>
    </location>
</feature>
<feature type="active site" description="Proton acceptor" evidence="1">
    <location>
        <position position="326"/>
    </location>
</feature>
<feature type="active site" description="Proton acceptor" evidence="1">
    <location>
        <position position="327"/>
    </location>
</feature>
<feature type="binding site" evidence="1">
    <location>
        <position position="130"/>
    </location>
    <ligand>
        <name>NAD(+)</name>
        <dbReference type="ChEBI" id="CHEBI:57540"/>
    </ligand>
</feature>
<feature type="binding site" evidence="1">
    <location>
        <position position="188"/>
    </location>
    <ligand>
        <name>NAD(+)</name>
        <dbReference type="ChEBI" id="CHEBI:57540"/>
    </ligand>
</feature>
<feature type="binding site" evidence="1">
    <location>
        <position position="211"/>
    </location>
    <ligand>
        <name>NAD(+)</name>
        <dbReference type="ChEBI" id="CHEBI:57540"/>
    </ligand>
</feature>
<feature type="binding site" evidence="1">
    <location>
        <position position="237"/>
    </location>
    <ligand>
        <name>substrate</name>
    </ligand>
</feature>
<feature type="binding site" evidence="1">
    <location>
        <position position="259"/>
    </location>
    <ligand>
        <name>substrate</name>
    </ligand>
</feature>
<feature type="binding site" evidence="1">
    <location>
        <position position="259"/>
    </location>
    <ligand>
        <name>Zn(2+)</name>
        <dbReference type="ChEBI" id="CHEBI:29105"/>
    </ligand>
</feature>
<feature type="binding site" evidence="1">
    <location>
        <position position="262"/>
    </location>
    <ligand>
        <name>substrate</name>
    </ligand>
</feature>
<feature type="binding site" evidence="6">
    <location>
        <position position="262"/>
    </location>
    <ligand>
        <name>Zn(2+)</name>
        <dbReference type="ChEBI" id="CHEBI:29105"/>
    </ligand>
</feature>
<feature type="binding site" evidence="1">
    <location>
        <position position="327"/>
    </location>
    <ligand>
        <name>substrate</name>
    </ligand>
</feature>
<feature type="binding site" evidence="1">
    <location>
        <position position="360"/>
    </location>
    <ligand>
        <name>substrate</name>
    </ligand>
</feature>
<feature type="binding site" evidence="1">
    <location>
        <position position="360"/>
    </location>
    <ligand>
        <name>Zn(2+)</name>
        <dbReference type="ChEBI" id="CHEBI:29105"/>
    </ligand>
</feature>
<feature type="binding site" evidence="1">
    <location>
        <position position="414"/>
    </location>
    <ligand>
        <name>substrate</name>
    </ligand>
</feature>
<feature type="binding site" evidence="1">
    <location>
        <position position="419"/>
    </location>
    <ligand>
        <name>substrate</name>
    </ligand>
</feature>
<feature type="binding site" evidence="6">
    <location>
        <position position="419"/>
    </location>
    <ligand>
        <name>Zn(2+)</name>
        <dbReference type="ChEBI" id="CHEBI:29105"/>
    </ligand>
</feature>
<feature type="mutagenesis site" description="Slight decrease in activity." evidence="2">
    <original>H</original>
    <variation>N</variation>
    <location>
        <position position="99"/>
    </location>
</feature>
<feature type="mutagenesis site" description="Almost no change in activity." evidence="5">
    <original>C</original>
    <variation>A</variation>
    <variation>S</variation>
    <location>
        <position position="117"/>
    </location>
</feature>
<feature type="mutagenesis site" description="Almost no change in activity." evidence="5">
    <original>C</original>
    <variation>A</variation>
    <variation>S</variation>
    <location>
        <position position="154"/>
    </location>
</feature>
<feature type="mutagenesis site" description="7000-fold decrease in activity." evidence="2">
    <original>H</original>
    <variation>N</variation>
    <location>
        <position position="262"/>
    </location>
</feature>
<feature type="mutagenesis site" description="500-fold decrease in activity." evidence="2">
    <original>H</original>
    <variation>N</variation>
    <location>
        <position position="327"/>
    </location>
</feature>
<feature type="mutagenesis site" description="Slight decrease in activity." evidence="2">
    <original>H</original>
    <variation>N</variation>
    <location>
        <position position="367"/>
    </location>
</feature>
<feature type="mutagenesis site" description="20-fold decrease in activity." evidence="2">
    <original>H</original>
    <variation>Q</variation>
    <location>
        <position position="419"/>
    </location>
</feature>
<reference key="1">
    <citation type="journal article" date="1988" name="J. Mol. Biol.">
        <title>Structure and function of the Salmonella typhimurium and Escherichia coli K-12 histidine operons.</title>
        <authorList>
            <person name="Carlomagno M.S."/>
            <person name="Chiariotti L."/>
            <person name="Alifano P."/>
            <person name="Nappo A.G."/>
            <person name="Bruni C.B."/>
        </authorList>
    </citation>
    <scope>NUCLEOTIDE SEQUENCE [GENOMIC DNA]</scope>
    <source>
        <strain>LT2</strain>
    </source>
</reference>
<reference key="2">
    <citation type="submission" date="1989-08" db="EMBL/GenBank/DDBJ databases">
        <authorList>
            <person name="Barnes W.M."/>
            <person name="Husson R.N."/>
            <person name="Whittier R."/>
        </authorList>
    </citation>
    <scope>NUCLEOTIDE SEQUENCE [GENOMIC DNA]</scope>
    <source>
        <strain>LT2</strain>
    </source>
</reference>
<reference key="3">
    <citation type="journal article" date="2001" name="Nature">
        <title>Complete genome sequence of Salmonella enterica serovar Typhimurium LT2.</title>
        <authorList>
            <person name="McClelland M."/>
            <person name="Sanderson K.E."/>
            <person name="Spieth J."/>
            <person name="Clifton S.W."/>
            <person name="Latreille P."/>
            <person name="Courtney L."/>
            <person name="Porwollik S."/>
            <person name="Ali J."/>
            <person name="Dante M."/>
            <person name="Du F."/>
            <person name="Hou S."/>
            <person name="Layman D."/>
            <person name="Leonard S."/>
            <person name="Nguyen C."/>
            <person name="Scott K."/>
            <person name="Holmes A."/>
            <person name="Grewal N."/>
            <person name="Mulvaney E."/>
            <person name="Ryan E."/>
            <person name="Sun H."/>
            <person name="Florea L."/>
            <person name="Miller W."/>
            <person name="Stoneking T."/>
            <person name="Nhan M."/>
            <person name="Waterston R."/>
            <person name="Wilson R.K."/>
        </authorList>
    </citation>
    <scope>NUCLEOTIDE SEQUENCE [LARGE SCALE GENOMIC DNA]</scope>
    <source>
        <strain>LT2 / SGSC1412 / ATCC 700720</strain>
    </source>
</reference>
<reference key="4">
    <citation type="journal article" date="1993" name="J. Biol. Chem.">
        <title>Conserved cysteine residues of histidinol dehydrogenase are not involved in catalysis. Novel chemistry required for enzymatic aldehyde oxidation.</title>
        <authorList>
            <person name="Teng H."/>
            <person name="Segura E."/>
            <person name="Grubmeyer C."/>
        </authorList>
    </citation>
    <scope>PROTEIN SEQUENCE OF 2-15</scope>
    <scope>MUTAGENESIS OF CYS-117 AND CYS-154</scope>
</reference>
<reference key="5">
    <citation type="journal article" date="1979" name="Biochem. J.">
        <title>The catalytically active form of histidinol dehydrogenase from Salmonella typhimurium.</title>
        <authorList>
            <person name="Buerger E."/>
            <person name="Goerisch H."/>
            <person name="Lingens F."/>
        </authorList>
    </citation>
    <scope>SUBUNIT</scope>
    <source>
        <strain>LT2</strain>
    </source>
</reference>
<reference key="6">
    <citation type="journal article" date="1986" name="Biochemistry">
        <title>A cysteine residue (cysteine-116) in the histidinol binding site of histidinol dehydrogenase.</title>
        <authorList>
            <person name="Grubmeyer C.T."/>
            <person name="Gray W.R."/>
        </authorList>
    </citation>
    <scope>PRELIMINARY ACTIVE SITE</scope>
</reference>
<reference key="7">
    <citation type="journal article" date="1989" name="Arch. Biochem. Biophys.">
        <title>L-histidinol dehydrogenase, a Zn2+-metalloenzyme.</title>
        <authorList>
            <person name="Grubmeyer C."/>
            <person name="Skiadopoulos M."/>
            <person name="Senior A.E."/>
        </authorList>
    </citation>
    <scope>COFACTOR</scope>
</reference>
<reference key="8">
    <citation type="journal article" date="1999" name="Biochemistry">
        <title>Mutagenesis of histidinol dehydrogenase reveals roles for conserved histidine residues.</title>
        <authorList>
            <person name="Teng H."/>
            <person name="Grubmeyer C."/>
        </authorList>
    </citation>
    <scope>MUTAGENESIS OF HIS-99; HIS-262; HIS-327; HIS-367 AND HIS-419</scope>
</reference>
<accession>P10370</accession>
<name>HISX_SALTY</name>
<proteinExistence type="evidence at protein level"/>
<dbReference type="EC" id="1.1.1.23"/>
<dbReference type="EMBL" id="X13464">
    <property type="protein sequence ID" value="CAA31823.1"/>
    <property type="molecule type" value="Genomic_DNA"/>
</dbReference>
<dbReference type="EMBL" id="J01804">
    <property type="protein sequence ID" value="AAA88615.1"/>
    <property type="molecule type" value="Genomic_DNA"/>
</dbReference>
<dbReference type="EMBL" id="AE006468">
    <property type="protein sequence ID" value="AAL20976.1"/>
    <property type="molecule type" value="Genomic_DNA"/>
</dbReference>
<dbReference type="PIR" id="JS0157">
    <property type="entry name" value="DEEBHT"/>
</dbReference>
<dbReference type="RefSeq" id="NP_461017.1">
    <property type="nucleotide sequence ID" value="NC_003197.2"/>
</dbReference>
<dbReference type="RefSeq" id="WP_000009626.1">
    <property type="nucleotide sequence ID" value="NC_003197.2"/>
</dbReference>
<dbReference type="SMR" id="P10370"/>
<dbReference type="STRING" id="99287.STM2072"/>
<dbReference type="PaxDb" id="99287-STM2072"/>
<dbReference type="GeneID" id="1253593"/>
<dbReference type="KEGG" id="stm:STM2072"/>
<dbReference type="PATRIC" id="fig|99287.12.peg.2194"/>
<dbReference type="HOGENOM" id="CLU_006732_3_0_6"/>
<dbReference type="OMA" id="YIAGPNH"/>
<dbReference type="PhylomeDB" id="P10370"/>
<dbReference type="BioCyc" id="SENT99287:STM2072-MONOMER"/>
<dbReference type="BRENDA" id="1.1.1.23">
    <property type="organism ID" value="5542"/>
</dbReference>
<dbReference type="SABIO-RK" id="P10370"/>
<dbReference type="UniPathway" id="UPA00031">
    <property type="reaction ID" value="UER00014"/>
</dbReference>
<dbReference type="Proteomes" id="UP000001014">
    <property type="component" value="Chromosome"/>
</dbReference>
<dbReference type="GO" id="GO:0005737">
    <property type="term" value="C:cytoplasm"/>
    <property type="evidence" value="ECO:0000318"/>
    <property type="project" value="GO_Central"/>
</dbReference>
<dbReference type="GO" id="GO:0005829">
    <property type="term" value="C:cytosol"/>
    <property type="evidence" value="ECO:0000318"/>
    <property type="project" value="GO_Central"/>
</dbReference>
<dbReference type="GO" id="GO:0004399">
    <property type="term" value="F:histidinol dehydrogenase activity"/>
    <property type="evidence" value="ECO:0000318"/>
    <property type="project" value="GO_Central"/>
</dbReference>
<dbReference type="GO" id="GO:0051287">
    <property type="term" value="F:NAD binding"/>
    <property type="evidence" value="ECO:0007669"/>
    <property type="project" value="InterPro"/>
</dbReference>
<dbReference type="GO" id="GO:0008270">
    <property type="term" value="F:zinc ion binding"/>
    <property type="evidence" value="ECO:0007669"/>
    <property type="project" value="UniProtKB-UniRule"/>
</dbReference>
<dbReference type="GO" id="GO:0000105">
    <property type="term" value="P:L-histidine biosynthetic process"/>
    <property type="evidence" value="ECO:0000318"/>
    <property type="project" value="GO_Central"/>
</dbReference>
<dbReference type="CDD" id="cd06572">
    <property type="entry name" value="Histidinol_dh"/>
    <property type="match status" value="1"/>
</dbReference>
<dbReference type="FunFam" id="1.20.5.1300:FF:000001">
    <property type="entry name" value="Histidine biosynthesis trifunctional protein"/>
    <property type="match status" value="1"/>
</dbReference>
<dbReference type="FunFam" id="3.40.50.1980:FF:000001">
    <property type="entry name" value="Histidinol dehydrogenase"/>
    <property type="match status" value="1"/>
</dbReference>
<dbReference type="Gene3D" id="1.20.5.1300">
    <property type="match status" value="1"/>
</dbReference>
<dbReference type="Gene3D" id="3.40.50.1980">
    <property type="entry name" value="Nitrogenase molybdenum iron protein domain"/>
    <property type="match status" value="2"/>
</dbReference>
<dbReference type="HAMAP" id="MF_01024">
    <property type="entry name" value="HisD"/>
    <property type="match status" value="1"/>
</dbReference>
<dbReference type="InterPro" id="IPR016161">
    <property type="entry name" value="Ald_DH/histidinol_DH"/>
</dbReference>
<dbReference type="InterPro" id="IPR001692">
    <property type="entry name" value="Histidinol_DH_CS"/>
</dbReference>
<dbReference type="InterPro" id="IPR022695">
    <property type="entry name" value="Histidinol_DH_monofunct"/>
</dbReference>
<dbReference type="InterPro" id="IPR012131">
    <property type="entry name" value="Hstdl_DH"/>
</dbReference>
<dbReference type="NCBIfam" id="TIGR00069">
    <property type="entry name" value="hisD"/>
    <property type="match status" value="1"/>
</dbReference>
<dbReference type="PANTHER" id="PTHR21256:SF2">
    <property type="entry name" value="HISTIDINE BIOSYNTHESIS TRIFUNCTIONAL PROTEIN"/>
    <property type="match status" value="1"/>
</dbReference>
<dbReference type="PANTHER" id="PTHR21256">
    <property type="entry name" value="HISTIDINOL DEHYDROGENASE HDH"/>
    <property type="match status" value="1"/>
</dbReference>
<dbReference type="Pfam" id="PF00815">
    <property type="entry name" value="Histidinol_dh"/>
    <property type="match status" value="1"/>
</dbReference>
<dbReference type="PIRSF" id="PIRSF000099">
    <property type="entry name" value="Histidinol_dh"/>
    <property type="match status" value="1"/>
</dbReference>
<dbReference type="PRINTS" id="PR00083">
    <property type="entry name" value="HOLDHDRGNASE"/>
</dbReference>
<dbReference type="SUPFAM" id="SSF53720">
    <property type="entry name" value="ALDH-like"/>
    <property type="match status" value="1"/>
</dbReference>
<dbReference type="PROSITE" id="PS00611">
    <property type="entry name" value="HISOL_DEHYDROGENASE"/>
    <property type="match status" value="1"/>
</dbReference>
<protein>
    <recommendedName>
        <fullName>Histidinol dehydrogenase</fullName>
        <shortName>HDH</shortName>
        <ecNumber>1.1.1.23</ecNumber>
    </recommendedName>
</protein>
<keyword id="KW-0028">Amino-acid biosynthesis</keyword>
<keyword id="KW-0903">Direct protein sequencing</keyword>
<keyword id="KW-0368">Histidine biosynthesis</keyword>
<keyword id="KW-0464">Manganese</keyword>
<keyword id="KW-0479">Metal-binding</keyword>
<keyword id="KW-0520">NAD</keyword>
<keyword id="KW-0560">Oxidoreductase</keyword>
<keyword id="KW-1185">Reference proteome</keyword>
<keyword id="KW-0862">Zinc</keyword>
<organism>
    <name type="scientific">Salmonella typhimurium (strain LT2 / SGSC1412 / ATCC 700720)</name>
    <dbReference type="NCBI Taxonomy" id="99287"/>
    <lineage>
        <taxon>Bacteria</taxon>
        <taxon>Pseudomonadati</taxon>
        <taxon>Pseudomonadota</taxon>
        <taxon>Gammaproteobacteria</taxon>
        <taxon>Enterobacterales</taxon>
        <taxon>Enterobacteriaceae</taxon>
        <taxon>Salmonella</taxon>
    </lineage>
</organism>
<comment type="function">
    <text>Catalyzes the sequential NAD-dependent oxidations of L-histidinol to L-histidinaldehyde and then to L-histidine.</text>
</comment>
<comment type="catalytic activity">
    <reaction>
        <text>L-histidinol + 2 NAD(+) + H2O = L-histidine + 2 NADH + 3 H(+)</text>
        <dbReference type="Rhea" id="RHEA:20641"/>
        <dbReference type="ChEBI" id="CHEBI:15377"/>
        <dbReference type="ChEBI" id="CHEBI:15378"/>
        <dbReference type="ChEBI" id="CHEBI:57540"/>
        <dbReference type="ChEBI" id="CHEBI:57595"/>
        <dbReference type="ChEBI" id="CHEBI:57699"/>
        <dbReference type="ChEBI" id="CHEBI:57945"/>
        <dbReference type="EC" id="1.1.1.23"/>
    </reaction>
</comment>
<comment type="cofactor">
    <cofactor evidence="3">
        <name>Zn(2+)</name>
        <dbReference type="ChEBI" id="CHEBI:29105"/>
    </cofactor>
    <cofactor evidence="3">
        <name>Mn(2+)</name>
        <dbReference type="ChEBI" id="CHEBI:29035"/>
    </cofactor>
    <text evidence="3">Binds 1 zinc ion per subunit. At high pH manganese can replace zinc.</text>
</comment>
<comment type="activity regulation">
    <text>Activity is lost when the metal is removed through urea denaturation or chelation, and can be regained by addition of metal.</text>
</comment>
<comment type="pathway">
    <text>Amino-acid biosynthesis; L-histidine biosynthesis; L-histidine from 5-phospho-alpha-D-ribose 1-diphosphate: step 9/9.</text>
</comment>
<comment type="subunit">
    <text evidence="4">Homodimer.</text>
</comment>
<comment type="similarity">
    <text evidence="6">Belongs to the histidinol dehydrogenase family.</text>
</comment>
<comment type="caution">
    <text evidence="6">PubMed:3533140 originally reported Cys-117 to be the active site. PubMed:8314784 has shown this to be wrong.</text>
</comment>